<sequence>MNYFPWLTIIVVFPIFAGSLIFFLPHKGNRVIRWYTICICILELLLTTYAFCYHFQSDDPLIQLVEDYKWINFFDFHWRLGIDGLSIGPILLTGFITTLATLAAWPVTRDSRLFHFLMLAMYSGQIGSFSSRDLLLFFIMWELELIPVYLLLCMWGGKKRLYSATKFILYTAGGSVFLLMGVLGLALYGSNEPTLNFETSVNQSYPVVLEIIFYIGFFIAFAVKSPIIPLHTWLPDTHGEAHYSTCMLLAGILLKMGAYGLIRINMELLPHAHSIFSPWLMIIGTIQIIYAALTSLGQRNLKKRIAYSSVSHMGFIIIGISSLTDTGLNGALLQIISHGFIGAALFFLAGTTYDRIRLVYLDEMGGIAIPMPKMFTMFSSFSMASLALPGMSGFVAELIVFFGIITGQKYLLIPKILITFVMAIGMILTPIYSLSMSRQMFYGYKLFNAPKDSFFDSGPRELFLSISIFLPVIGIGIYPDFVLSLAVDKVEVILSNFFYR</sequence>
<comment type="catalytic activity">
    <reaction>
        <text>a plastoquinone + NADH + (n+1) H(+)(in) = a plastoquinol + NAD(+) + n H(+)(out)</text>
        <dbReference type="Rhea" id="RHEA:42608"/>
        <dbReference type="Rhea" id="RHEA-COMP:9561"/>
        <dbReference type="Rhea" id="RHEA-COMP:9562"/>
        <dbReference type="ChEBI" id="CHEBI:15378"/>
        <dbReference type="ChEBI" id="CHEBI:17757"/>
        <dbReference type="ChEBI" id="CHEBI:57540"/>
        <dbReference type="ChEBI" id="CHEBI:57945"/>
        <dbReference type="ChEBI" id="CHEBI:62192"/>
    </reaction>
</comment>
<comment type="catalytic activity">
    <reaction>
        <text>a plastoquinone + NADPH + (n+1) H(+)(in) = a plastoquinol + NADP(+) + n H(+)(out)</text>
        <dbReference type="Rhea" id="RHEA:42612"/>
        <dbReference type="Rhea" id="RHEA-COMP:9561"/>
        <dbReference type="Rhea" id="RHEA-COMP:9562"/>
        <dbReference type="ChEBI" id="CHEBI:15378"/>
        <dbReference type="ChEBI" id="CHEBI:17757"/>
        <dbReference type="ChEBI" id="CHEBI:57783"/>
        <dbReference type="ChEBI" id="CHEBI:58349"/>
        <dbReference type="ChEBI" id="CHEBI:62192"/>
    </reaction>
</comment>
<comment type="subcellular location">
    <subcellularLocation>
        <location evidence="4">Plastid</location>
        <location evidence="4">Chloroplast thylakoid membrane</location>
        <topology evidence="4">Multi-pass membrane protein</topology>
    </subcellularLocation>
</comment>
<comment type="RNA editing">
    <location>
        <position position="1" evidence="2 3"/>
    </location>
    <location>
        <position position="42" evidence="2 3"/>
    </location>
    <text>The initiator methionine is created by RNA editing.</text>
</comment>
<comment type="similarity">
    <text evidence="4">Belongs to the complex I subunit 4 family.</text>
</comment>
<comment type="sequence caution" evidence="4">
    <conflict type="erroneous initiation">
        <sequence resource="EMBL-CDS" id="CAA77432"/>
    </conflict>
</comment>
<evidence type="ECO:0000255" key="1"/>
<evidence type="ECO:0000269" key="2">
    <source>
    </source>
</evidence>
<evidence type="ECO:0000269" key="3">
    <source>
    </source>
</evidence>
<evidence type="ECO:0000305" key="4"/>
<keyword id="KW-0150">Chloroplast</keyword>
<keyword id="KW-0472">Membrane</keyword>
<keyword id="KW-0520">NAD</keyword>
<keyword id="KW-0521">NADP</keyword>
<keyword id="KW-0934">Plastid</keyword>
<keyword id="KW-0618">Plastoquinone</keyword>
<keyword id="KW-0874">Quinone</keyword>
<keyword id="KW-1185">Reference proteome</keyword>
<keyword id="KW-0691">RNA editing</keyword>
<keyword id="KW-0793">Thylakoid</keyword>
<keyword id="KW-1278">Translocase</keyword>
<keyword id="KW-0812">Transmembrane</keyword>
<keyword id="KW-1133">Transmembrane helix</keyword>
<organism>
    <name type="scientific">Nicotiana tabacum</name>
    <name type="common">Common tobacco</name>
    <dbReference type="NCBI Taxonomy" id="4097"/>
    <lineage>
        <taxon>Eukaryota</taxon>
        <taxon>Viridiplantae</taxon>
        <taxon>Streptophyta</taxon>
        <taxon>Embryophyta</taxon>
        <taxon>Tracheophyta</taxon>
        <taxon>Spermatophyta</taxon>
        <taxon>Magnoliopsida</taxon>
        <taxon>eudicotyledons</taxon>
        <taxon>Gunneridae</taxon>
        <taxon>Pentapetalae</taxon>
        <taxon>asterids</taxon>
        <taxon>lamiids</taxon>
        <taxon>Solanales</taxon>
        <taxon>Solanaceae</taxon>
        <taxon>Nicotianoideae</taxon>
        <taxon>Nicotianeae</taxon>
        <taxon>Nicotiana</taxon>
    </lineage>
</organism>
<protein>
    <recommendedName>
        <fullName>NAD(P)H-quinone oxidoreductase chain 4, chloroplastic</fullName>
        <ecNumber>7.1.1.-</ecNumber>
    </recommendedName>
    <alternativeName>
        <fullName>NAD(P)H dehydrogenase, chain 4</fullName>
    </alternativeName>
    <alternativeName>
        <fullName>NADH-plastoquinone oxidoreductase chain 4</fullName>
    </alternativeName>
</protein>
<name>NU4C_TOBAC</name>
<accession>P06262</accession>
<feature type="chain" id="PRO_0000118031" description="NAD(P)H-quinone oxidoreductase chain 4, chloroplastic">
    <location>
        <begin position="1"/>
        <end position="500"/>
    </location>
</feature>
<feature type="transmembrane region" description="Helical" evidence="1">
    <location>
        <begin position="4"/>
        <end position="24"/>
    </location>
</feature>
<feature type="transmembrane region" description="Helical" evidence="1">
    <location>
        <begin position="35"/>
        <end position="55"/>
    </location>
</feature>
<feature type="transmembrane region" description="Helical" evidence="1">
    <location>
        <begin position="87"/>
        <end position="107"/>
    </location>
</feature>
<feature type="transmembrane region" description="Helical" evidence="1">
    <location>
        <begin position="113"/>
        <end position="130"/>
    </location>
</feature>
<feature type="transmembrane region" description="Helical" evidence="1">
    <location>
        <begin position="134"/>
        <end position="154"/>
    </location>
</feature>
<feature type="transmembrane region" description="Helical" evidence="1">
    <location>
        <begin position="167"/>
        <end position="187"/>
    </location>
</feature>
<feature type="transmembrane region" description="Helical" evidence="1">
    <location>
        <begin position="208"/>
        <end position="228"/>
    </location>
</feature>
<feature type="transmembrane region" description="Helical" evidence="1">
    <location>
        <begin position="242"/>
        <end position="262"/>
    </location>
</feature>
<feature type="transmembrane region" description="Helical" evidence="1">
    <location>
        <begin position="274"/>
        <end position="294"/>
    </location>
</feature>
<feature type="transmembrane region" description="Helical" evidence="1">
    <location>
        <begin position="305"/>
        <end position="325"/>
    </location>
</feature>
<feature type="transmembrane region" description="Helical" evidence="1">
    <location>
        <begin position="330"/>
        <end position="350"/>
    </location>
</feature>
<feature type="transmembrane region" description="Helical" evidence="1">
    <location>
        <begin position="386"/>
        <end position="406"/>
    </location>
</feature>
<feature type="transmembrane region" description="Helical" evidence="1">
    <location>
        <begin position="411"/>
        <end position="431"/>
    </location>
</feature>
<feature type="transmembrane region" description="Helical" evidence="1">
    <location>
        <begin position="462"/>
        <end position="482"/>
    </location>
</feature>
<dbReference type="EC" id="7.1.1.-"/>
<dbReference type="EMBL" id="Z00044">
    <property type="protein sequence ID" value="CAA77432.1"/>
    <property type="status" value="ALT_INIT"/>
    <property type="molecule type" value="Genomic_DNA"/>
</dbReference>
<dbReference type="EMBL" id="X76975">
    <property type="protein sequence ID" value="CAA54280.1"/>
    <property type="molecule type" value="mRNA"/>
</dbReference>
<dbReference type="PIR" id="A00444">
    <property type="entry name" value="DENTN4"/>
</dbReference>
<dbReference type="RefSeq" id="NP_054557.2">
    <property type="nucleotide sequence ID" value="NC_001879.2"/>
</dbReference>
<dbReference type="SMR" id="P06262"/>
<dbReference type="GeneID" id="800483"/>
<dbReference type="KEGG" id="nta:800483"/>
<dbReference type="OMA" id="ITRWGNQ"/>
<dbReference type="OrthoDB" id="564260at2759"/>
<dbReference type="Proteomes" id="UP000084051">
    <property type="component" value="Unplaced"/>
</dbReference>
<dbReference type="GO" id="GO:0009535">
    <property type="term" value="C:chloroplast thylakoid membrane"/>
    <property type="evidence" value="ECO:0007669"/>
    <property type="project" value="UniProtKB-SubCell"/>
</dbReference>
<dbReference type="GO" id="GO:0008137">
    <property type="term" value="F:NADH dehydrogenase (ubiquinone) activity"/>
    <property type="evidence" value="ECO:0007669"/>
    <property type="project" value="InterPro"/>
</dbReference>
<dbReference type="GO" id="GO:0048038">
    <property type="term" value="F:quinone binding"/>
    <property type="evidence" value="ECO:0007669"/>
    <property type="project" value="UniProtKB-KW"/>
</dbReference>
<dbReference type="GO" id="GO:0042773">
    <property type="term" value="P:ATP synthesis coupled electron transport"/>
    <property type="evidence" value="ECO:0007669"/>
    <property type="project" value="InterPro"/>
</dbReference>
<dbReference type="HAMAP" id="MF_00491">
    <property type="entry name" value="NDH1_NuoM"/>
    <property type="match status" value="1"/>
</dbReference>
<dbReference type="InterPro" id="IPR022997">
    <property type="entry name" value="NADH_Q_OxRdtase_chain4"/>
</dbReference>
<dbReference type="InterPro" id="IPR010227">
    <property type="entry name" value="NADH_Q_OxRdtase_chainM/4"/>
</dbReference>
<dbReference type="InterPro" id="IPR003918">
    <property type="entry name" value="NADH_UbQ_OxRdtase"/>
</dbReference>
<dbReference type="InterPro" id="IPR001750">
    <property type="entry name" value="ND/Mrp_TM"/>
</dbReference>
<dbReference type="NCBIfam" id="TIGR01972">
    <property type="entry name" value="NDH_I_M"/>
    <property type="match status" value="1"/>
</dbReference>
<dbReference type="PANTHER" id="PTHR43507:SF21">
    <property type="entry name" value="NAD(P)H-QUINONE OXIDOREDUCTASE CHAIN 4, CHLOROPLASTIC"/>
    <property type="match status" value="1"/>
</dbReference>
<dbReference type="PANTHER" id="PTHR43507">
    <property type="entry name" value="NADH-UBIQUINONE OXIDOREDUCTASE CHAIN 4"/>
    <property type="match status" value="1"/>
</dbReference>
<dbReference type="Pfam" id="PF00361">
    <property type="entry name" value="Proton_antipo_M"/>
    <property type="match status" value="1"/>
</dbReference>
<dbReference type="PRINTS" id="PR01437">
    <property type="entry name" value="NUOXDRDTASE4"/>
</dbReference>
<reference key="1">
    <citation type="journal article" date="1986" name="EMBO J.">
        <title>The complete nucleotide sequence of the tobacco chloroplast genome: its gene organization and expression.</title>
        <authorList>
            <person name="Shinozaki K."/>
            <person name="Ohme M."/>
            <person name="Tanaka M."/>
            <person name="Wakasugi T."/>
            <person name="Hayashida N."/>
            <person name="Matsubayashi T."/>
            <person name="Zaita N."/>
            <person name="Chunwongse J."/>
            <person name="Obokata J."/>
            <person name="Yamaguchi-Shinozaki K."/>
            <person name="Ohto C."/>
            <person name="Torazawa K."/>
            <person name="Meng B.-Y."/>
            <person name="Sugita M."/>
            <person name="Deno H."/>
            <person name="Kamogashira T."/>
            <person name="Yamada K."/>
            <person name="Kusuda J."/>
            <person name="Takaiwa F."/>
            <person name="Kato A."/>
            <person name="Tohdoh N."/>
            <person name="Shimada H."/>
            <person name="Sugiura M."/>
        </authorList>
    </citation>
    <scope>NUCLEOTIDE SEQUENCE [LARGE SCALE GENOMIC DNA]</scope>
    <source>
        <strain>cv. Bright Yellow 4</strain>
    </source>
</reference>
<reference key="2">
    <citation type="journal article" date="1994" name="Gene">
        <title>The role of RNA editing in conservation of start codons in chloroplast genomes.</title>
        <authorList>
            <person name="Neckermann K."/>
            <person name="Zeltz P."/>
            <person name="Igloi G.L."/>
            <person name="Koessel H."/>
            <person name="Maier R.M."/>
        </authorList>
    </citation>
    <scope>RNA EDITING OF INITIATOR CODON</scope>
</reference>
<reference key="3">
    <citation type="journal article" date="1999" name="Mol. Gen. Genet.">
        <title>RNA editing sites in tobacco chloroplast transcripts: editing as a possible regulator of chloroplast RNA polymerase activity.</title>
        <authorList>
            <person name="Hirose T."/>
            <person name="Kusumegi T."/>
            <person name="Tsudzuki T."/>
            <person name="Sugiura M."/>
        </authorList>
    </citation>
    <scope>RNA EDITING</scope>
</reference>
<gene>
    <name type="primary">ndhD</name>
    <name type="synonym">ndh4</name>
</gene>
<proteinExistence type="evidence at transcript level"/>
<geneLocation type="chloroplast"/>